<comment type="function">
    <text evidence="1">Catalyzes a late step in pyrimidine degradation. Converts N-carbamoyl-beta-alanine (3-ureidopropanoate) into beta-alanine, ammonia and carbon dioxide. Likewise, converts N-carbamoyl-beta-aminoisobutyrate (3-ureidoisobutyrate) into beta-aminoisobutyrate, ammonia and carbon dioxide.</text>
</comment>
<comment type="catalytic activity">
    <reaction evidence="3 4">
        <text>3-(carbamoylamino)propanoate + H2O + 2 H(+) = beta-alanine + NH4(+) + CO2</text>
        <dbReference type="Rhea" id="RHEA:11184"/>
        <dbReference type="ChEBI" id="CHEBI:11892"/>
        <dbReference type="ChEBI" id="CHEBI:15377"/>
        <dbReference type="ChEBI" id="CHEBI:15378"/>
        <dbReference type="ChEBI" id="CHEBI:16526"/>
        <dbReference type="ChEBI" id="CHEBI:28938"/>
        <dbReference type="ChEBI" id="CHEBI:57966"/>
        <dbReference type="EC" id="3.5.1.6"/>
    </reaction>
</comment>
<comment type="catalytic activity">
    <reaction evidence="1">
        <text>3-(carbamoylamino)-2-methylpropanoate + H2O + 2 H(+) = (R)-3-amino-2-methylpropanoate + NH4(+) + CO2</text>
        <dbReference type="Rhea" id="RHEA:37339"/>
        <dbReference type="ChEBI" id="CHEBI:15377"/>
        <dbReference type="ChEBI" id="CHEBI:15378"/>
        <dbReference type="ChEBI" id="CHEBI:16526"/>
        <dbReference type="ChEBI" id="CHEBI:28938"/>
        <dbReference type="ChEBI" id="CHEBI:57731"/>
        <dbReference type="ChEBI" id="CHEBI:74414"/>
        <dbReference type="EC" id="3.5.1.6"/>
    </reaction>
</comment>
<comment type="activity regulation">
    <text evidence="3">Allosteric enzyme with positive cooperativity toward the substrate N-carbamoyl-beta-alanine at low substrate concentrations (below 12 nM). Displays no cooperativity at substrate levels above 12 nM.</text>
</comment>
<comment type="biophysicochemical properties">
    <kinetics>
        <KM evidence="3">6.5 uM for N-carbamoyl-beta-alanine</KM>
    </kinetics>
</comment>
<comment type="pathway">
    <text evidence="3 4">Amino-acid biosynthesis; beta-alanine biosynthesis.</text>
</comment>
<comment type="subunit">
    <text evidence="3">Homodimer, homotetramer, homooctamer; can also form higher homooligomers.</text>
</comment>
<comment type="subcellular location">
    <subcellularLocation>
        <location>Cytoplasm</location>
    </subcellularLocation>
</comment>
<comment type="tissue specificity">
    <text evidence="4">Detected in liver (at protein level).</text>
</comment>
<comment type="PTM">
    <text evidence="7">The N-terminus is blocked.</text>
</comment>
<comment type="similarity">
    <text evidence="6">Belongs to the carbon-nitrogen hydrolase superfamily. BUP family.</text>
</comment>
<comment type="caution">
    <text evidence="1 4">The purified enzyme was shown to contain 1.8 zinc atoms per subunit, and sequence analysis was used to predict the zinc binding site (PubMed:8449931). The crystal structure of the human ortholog indicates a lack of bound zinc ions, and shows that the residues that were predicted to bind zinc are too far apart in space to form a zinc binding site (By similarity).</text>
</comment>
<accession>Q03248</accession>
<sequence length="393" mass="44042">MAGPEWQSLEQCLEKHLPPDDLSQVKRILYGKQTRNLDLPRKALEAASERNFELKGYAFGAAKEQQRCPQIVRVGLVQNRIPLPTSAPVAEQVSALHKRIEEIAEVAAMCGVNIICFQEAWNMPFAFCTREKLPWTEFAESAEDGLTTRFCQKLAKKHNMVVISPILERDRDHGGVLWNTAVVISNSGLVMGKTRKNHIPRVGDFNESTYYMEGNLGHPVFQTQFGRIAVNICYGRHHPLNWLMYSVNGAEIIFNPSATIGELSESMWPIEARNAAIANHCFTCALNRVGQEHYPNEFTSGDGKKAHHDLGYFYGSSYVAAPDGSRTPGLSRNQDGLLVTELNLNLCQQINDFWTFKMTGRLEMYARELAEAVKPNYSPNIVKEDLVLAPSSG</sequence>
<evidence type="ECO:0000250" key="1">
    <source>
        <dbReference type="UniProtKB" id="Q9UBR1"/>
    </source>
</evidence>
<evidence type="ECO:0000255" key="2">
    <source>
        <dbReference type="PROSITE-ProRule" id="PRU00054"/>
    </source>
</evidence>
<evidence type="ECO:0000269" key="3">
    <source>
    </source>
</evidence>
<evidence type="ECO:0000269" key="4">
    <source>
    </source>
</evidence>
<evidence type="ECO:0000303" key="5">
    <source>
    </source>
</evidence>
<evidence type="ECO:0000305" key="6"/>
<evidence type="ECO:0000305" key="7">
    <source>
    </source>
</evidence>
<evidence type="ECO:0007744" key="8">
    <source>
    </source>
</evidence>
<dbReference type="EC" id="3.5.1.6" evidence="3 4"/>
<dbReference type="EMBL" id="M97662">
    <property type="protein sequence ID" value="AAA40804.1"/>
    <property type="molecule type" value="mRNA"/>
</dbReference>
<dbReference type="EMBL" id="BC078767">
    <property type="protein sequence ID" value="AAH78767.1"/>
    <property type="molecule type" value="mRNA"/>
</dbReference>
<dbReference type="PIR" id="A46624">
    <property type="entry name" value="S27881"/>
</dbReference>
<dbReference type="RefSeq" id="NP_446297.1">
    <property type="nucleotide sequence ID" value="NM_053845.2"/>
</dbReference>
<dbReference type="SMR" id="Q03248"/>
<dbReference type="BioGRID" id="250508">
    <property type="interactions" value="1"/>
</dbReference>
<dbReference type="FunCoup" id="Q03248">
    <property type="interactions" value="224"/>
</dbReference>
<dbReference type="STRING" id="10116.ENSRNOP00000055035"/>
<dbReference type="iPTMnet" id="Q03248"/>
<dbReference type="PhosphoSitePlus" id="Q03248"/>
<dbReference type="Ensembl" id="ENSRNOT00000115726.1">
    <property type="protein sequence ID" value="ENSRNOP00000092718.1"/>
    <property type="gene ID" value="ENSRNOG00000038258.5"/>
</dbReference>
<dbReference type="GeneID" id="116593"/>
<dbReference type="KEGG" id="rno:116593"/>
<dbReference type="AGR" id="RGD:620091"/>
<dbReference type="CTD" id="51733"/>
<dbReference type="RGD" id="620091">
    <property type="gene designation" value="Upb1"/>
</dbReference>
<dbReference type="GeneTree" id="ENSGT00390000004906"/>
<dbReference type="InParanoid" id="Q03248"/>
<dbReference type="OMA" id="HWPFLRD"/>
<dbReference type="OrthoDB" id="412018at2759"/>
<dbReference type="PhylomeDB" id="Q03248"/>
<dbReference type="BioCyc" id="MetaCyc:MONOMER-15401"/>
<dbReference type="Reactome" id="R-RNO-73621">
    <property type="pathway name" value="Pyrimidine catabolism"/>
</dbReference>
<dbReference type="SABIO-RK" id="Q03248"/>
<dbReference type="UniPathway" id="UPA00131"/>
<dbReference type="PRO" id="PR:Q03248"/>
<dbReference type="Proteomes" id="UP000002494">
    <property type="component" value="Chromosome 20"/>
</dbReference>
<dbReference type="GO" id="GO:0005829">
    <property type="term" value="C:cytosol"/>
    <property type="evidence" value="ECO:0000266"/>
    <property type="project" value="RGD"/>
</dbReference>
<dbReference type="GO" id="GO:0003837">
    <property type="term" value="F:beta-ureidopropionase activity"/>
    <property type="evidence" value="ECO:0000314"/>
    <property type="project" value="RGD"/>
</dbReference>
<dbReference type="GO" id="GO:0042803">
    <property type="term" value="F:protein homodimerization activity"/>
    <property type="evidence" value="ECO:0000266"/>
    <property type="project" value="RGD"/>
</dbReference>
<dbReference type="GO" id="GO:0008270">
    <property type="term" value="F:zinc ion binding"/>
    <property type="evidence" value="ECO:0000314"/>
    <property type="project" value="RGD"/>
</dbReference>
<dbReference type="GO" id="GO:0019483">
    <property type="term" value="P:beta-alanine biosynthetic process"/>
    <property type="evidence" value="ECO:0000304"/>
    <property type="project" value="RGD"/>
</dbReference>
<dbReference type="GO" id="GO:0033396">
    <property type="term" value="P:beta-alanine biosynthetic process via 3-ureidopropionate"/>
    <property type="evidence" value="ECO:0000250"/>
    <property type="project" value="UniProtKB"/>
</dbReference>
<dbReference type="GO" id="GO:0019482">
    <property type="term" value="P:beta-alanine metabolic process"/>
    <property type="evidence" value="ECO:0000314"/>
    <property type="project" value="RGD"/>
</dbReference>
<dbReference type="GO" id="GO:0006248">
    <property type="term" value="P:CMP catabolic process"/>
    <property type="evidence" value="ECO:0000266"/>
    <property type="project" value="RGD"/>
</dbReference>
<dbReference type="GO" id="GO:0006249">
    <property type="term" value="P:dCMP catabolic process"/>
    <property type="evidence" value="ECO:0000266"/>
    <property type="project" value="RGD"/>
</dbReference>
<dbReference type="GO" id="GO:0046079">
    <property type="term" value="P:dUMP catabolic process"/>
    <property type="evidence" value="ECO:0000266"/>
    <property type="project" value="RGD"/>
</dbReference>
<dbReference type="GO" id="GO:0001701">
    <property type="term" value="P:in utero embryonic development"/>
    <property type="evidence" value="ECO:0000270"/>
    <property type="project" value="RGD"/>
</dbReference>
<dbReference type="GO" id="GO:0001889">
    <property type="term" value="P:liver development"/>
    <property type="evidence" value="ECO:0000314"/>
    <property type="project" value="RGD"/>
</dbReference>
<dbReference type="GO" id="GO:0051260">
    <property type="term" value="P:protein homooligomerization"/>
    <property type="evidence" value="ECO:0000250"/>
    <property type="project" value="UniProtKB"/>
</dbReference>
<dbReference type="GO" id="GO:0051289">
    <property type="term" value="P:protein homotetramerization"/>
    <property type="evidence" value="ECO:0000266"/>
    <property type="project" value="RGD"/>
</dbReference>
<dbReference type="GO" id="GO:0046135">
    <property type="term" value="P:pyrimidine nucleoside catabolic process"/>
    <property type="evidence" value="ECO:0000250"/>
    <property type="project" value="UniProtKB"/>
</dbReference>
<dbReference type="GO" id="GO:0046050">
    <property type="term" value="P:UMP catabolic process"/>
    <property type="evidence" value="ECO:0000266"/>
    <property type="project" value="RGD"/>
</dbReference>
<dbReference type="CDD" id="cd07587">
    <property type="entry name" value="ML_beta-AS"/>
    <property type="match status" value="1"/>
</dbReference>
<dbReference type="FunFam" id="3.60.110.10:FF:000009">
    <property type="entry name" value="Beta-ureidopropionase 1"/>
    <property type="match status" value="1"/>
</dbReference>
<dbReference type="Gene3D" id="3.60.110.10">
    <property type="entry name" value="Carbon-nitrogen hydrolase"/>
    <property type="match status" value="1"/>
</dbReference>
<dbReference type="InterPro" id="IPR050345">
    <property type="entry name" value="Aliph_Amidase/BUP"/>
</dbReference>
<dbReference type="InterPro" id="IPR003010">
    <property type="entry name" value="C-N_Hydrolase"/>
</dbReference>
<dbReference type="InterPro" id="IPR036526">
    <property type="entry name" value="C-N_Hydrolase_sf"/>
</dbReference>
<dbReference type="PANTHER" id="PTHR43674:SF2">
    <property type="entry name" value="BETA-UREIDOPROPIONASE"/>
    <property type="match status" value="1"/>
</dbReference>
<dbReference type="PANTHER" id="PTHR43674">
    <property type="entry name" value="NITRILASE C965.09-RELATED"/>
    <property type="match status" value="1"/>
</dbReference>
<dbReference type="Pfam" id="PF00795">
    <property type="entry name" value="CN_hydrolase"/>
    <property type="match status" value="1"/>
</dbReference>
<dbReference type="SUPFAM" id="SSF56317">
    <property type="entry name" value="Carbon-nitrogen hydrolase"/>
    <property type="match status" value="1"/>
</dbReference>
<dbReference type="PROSITE" id="PS50263">
    <property type="entry name" value="CN_HYDROLASE"/>
    <property type="match status" value="1"/>
</dbReference>
<gene>
    <name type="primary">Upb1</name>
    <name type="synonym">Bup1</name>
</gene>
<reference key="1">
    <citation type="journal article" date="1993" name="J. Biol. Chem.">
        <title>Cloning, sequencing, and expression of a cDNA encoding beta-alanine synthase from rat liver.</title>
        <authorList>
            <person name="Kvalnes-Krick K.L."/>
            <person name="Traut T.W."/>
        </authorList>
    </citation>
    <scope>NUCLEOTIDE SEQUENCE [MRNA]</scope>
    <scope>PROTEIN SEQUENCE OF 202-212</scope>
    <scope>FUNCTION</scope>
    <scope>CATALYTIC ACTIVITY</scope>
    <scope>PATHWAY</scope>
    <scope>PREDICTED ZINC-BINDING SITES</scope>
    <scope>TISSUE SPECIFICITY</scope>
    <source>
        <tissue>Liver</tissue>
    </source>
</reference>
<reference key="2">
    <citation type="journal article" date="2004" name="Genome Res.">
        <title>The status, quality, and expansion of the NIH full-length cDNA project: the Mammalian Gene Collection (MGC).</title>
        <authorList>
            <consortium name="The MGC Project Team"/>
        </authorList>
    </citation>
    <scope>NUCLEOTIDE SEQUENCE [LARGE SCALE MRNA]</scope>
    <source>
        <tissue>Kidney</tissue>
    </source>
</reference>
<reference key="3">
    <citation type="journal article" date="1992" name="Arch. Biochem. Biophys.">
        <title>beta-Alanine synthase: purification and allosteric properties.</title>
        <authorList>
            <person name="Matthews M.M."/>
            <person name="Liao W."/>
            <person name="Kvalnes-Krick K.L."/>
            <person name="Traut T.W."/>
        </authorList>
    </citation>
    <scope>CATALYTIC ACTIVITY</scope>
    <scope>FUNCTION</scope>
    <scope>SUBUNIT</scope>
    <scope>PATHWAY</scope>
    <scope>BIOPHYSICOCHEMICAL PROPERTIES</scope>
    <scope>ACTIVITY REGULATION</scope>
</reference>
<reference key="4">
    <citation type="journal article" date="2012" name="Nat. Commun.">
        <title>Quantitative maps of protein phosphorylation sites across 14 different rat organs and tissues.</title>
        <authorList>
            <person name="Lundby A."/>
            <person name="Secher A."/>
            <person name="Lage K."/>
            <person name="Nordsborg N.B."/>
            <person name="Dmytriyev A."/>
            <person name="Lundby C."/>
            <person name="Olsen J.V."/>
        </authorList>
    </citation>
    <scope>PHOSPHORYLATION [LARGE SCALE ANALYSIS] AT SER-378</scope>
    <scope>IDENTIFICATION BY MASS SPECTROMETRY [LARGE SCALE ANALYSIS]</scope>
</reference>
<proteinExistence type="evidence at protein level"/>
<feature type="chain" id="PRO_0000204054" description="Beta-ureidopropionase">
    <location>
        <begin position="1"/>
        <end position="393"/>
    </location>
</feature>
<feature type="domain" description="CN hydrolase" evidence="2">
    <location>
        <begin position="72"/>
        <end position="344"/>
    </location>
</feature>
<feature type="active site" description="Proton acceptor" evidence="2">
    <location>
        <position position="119"/>
    </location>
</feature>
<feature type="active site" description="Proton donor" evidence="2">
    <location>
        <position position="196"/>
    </location>
</feature>
<feature type="active site" description="Nucleophile" evidence="2">
    <location>
        <position position="233"/>
    </location>
</feature>
<feature type="modified residue" description="Phosphoserine" evidence="8">
    <location>
        <position position="378"/>
    </location>
</feature>
<keyword id="KW-0021">Allosteric enzyme</keyword>
<keyword id="KW-0963">Cytoplasm</keyword>
<keyword id="KW-0903">Direct protein sequencing</keyword>
<keyword id="KW-0378">Hydrolase</keyword>
<keyword id="KW-0479">Metal-binding</keyword>
<keyword id="KW-0597">Phosphoprotein</keyword>
<keyword id="KW-1185">Reference proteome</keyword>
<keyword id="KW-0862">Zinc</keyword>
<organism>
    <name type="scientific">Rattus norvegicus</name>
    <name type="common">Rat</name>
    <dbReference type="NCBI Taxonomy" id="10116"/>
    <lineage>
        <taxon>Eukaryota</taxon>
        <taxon>Metazoa</taxon>
        <taxon>Chordata</taxon>
        <taxon>Craniata</taxon>
        <taxon>Vertebrata</taxon>
        <taxon>Euteleostomi</taxon>
        <taxon>Mammalia</taxon>
        <taxon>Eutheria</taxon>
        <taxon>Euarchontoglires</taxon>
        <taxon>Glires</taxon>
        <taxon>Rodentia</taxon>
        <taxon>Myomorpha</taxon>
        <taxon>Muroidea</taxon>
        <taxon>Muridae</taxon>
        <taxon>Murinae</taxon>
        <taxon>Rattus</taxon>
    </lineage>
</organism>
<protein>
    <recommendedName>
        <fullName>Beta-ureidopropionase</fullName>
        <ecNumber evidence="3 4">3.5.1.6</ecNumber>
    </recommendedName>
    <alternativeName>
        <fullName evidence="5">Beta-alanine synthase</fullName>
    </alternativeName>
    <alternativeName>
        <fullName>N-carbamoyl-beta-alanine amidohydrolase</fullName>
    </alternativeName>
</protein>
<name>BUP1_RAT</name>